<feature type="chain" id="PRO_0000335208" description="DNA mismatch repair protein MutS">
    <location>
        <begin position="1"/>
        <end position="899"/>
    </location>
</feature>
<feature type="region of interest" description="Disordered" evidence="2">
    <location>
        <begin position="1"/>
        <end position="20"/>
    </location>
</feature>
<feature type="region of interest" description="Disordered" evidence="2">
    <location>
        <begin position="832"/>
        <end position="852"/>
    </location>
</feature>
<feature type="compositionally biased region" description="Low complexity" evidence="2">
    <location>
        <begin position="843"/>
        <end position="852"/>
    </location>
</feature>
<feature type="binding site" evidence="1">
    <location>
        <begin position="631"/>
        <end position="638"/>
    </location>
    <ligand>
        <name>ATP</name>
        <dbReference type="ChEBI" id="CHEBI:30616"/>
    </ligand>
</feature>
<keyword id="KW-0067">ATP-binding</keyword>
<keyword id="KW-0227">DNA damage</keyword>
<keyword id="KW-0234">DNA repair</keyword>
<keyword id="KW-0238">DNA-binding</keyword>
<keyword id="KW-0547">Nucleotide-binding</keyword>
<keyword id="KW-1185">Reference proteome</keyword>
<reference key="1">
    <citation type="journal article" date="2006" name="Nat. Biotechnol.">
        <title>Genome sequence of the bioplastic-producing 'Knallgas' bacterium Ralstonia eutropha H16.</title>
        <authorList>
            <person name="Pohlmann A."/>
            <person name="Fricke W.F."/>
            <person name="Reinecke F."/>
            <person name="Kusian B."/>
            <person name="Liesegang H."/>
            <person name="Cramm R."/>
            <person name="Eitinger T."/>
            <person name="Ewering C."/>
            <person name="Poetter M."/>
            <person name="Schwartz E."/>
            <person name="Strittmatter A."/>
            <person name="Voss I."/>
            <person name="Gottschalk G."/>
            <person name="Steinbuechel A."/>
            <person name="Friedrich B."/>
            <person name="Bowien B."/>
        </authorList>
    </citation>
    <scope>NUCLEOTIDE SEQUENCE [LARGE SCALE GENOMIC DNA]</scope>
    <source>
        <strain>ATCC 17699 / DSM 428 / KCTC 22496 / NCIMB 10442 / H16 / Stanier 337</strain>
    </source>
</reference>
<name>MUTS_CUPNH</name>
<proteinExistence type="inferred from homology"/>
<accession>Q0KCC0</accession>
<comment type="function">
    <text evidence="1">This protein is involved in the repair of mismatches in DNA. It is possible that it carries out the mismatch recognition step. This protein has a weak ATPase activity.</text>
</comment>
<comment type="similarity">
    <text evidence="1">Belongs to the DNA mismatch repair MutS family.</text>
</comment>
<sequence length="899" mass="97586">MGLQKKTDPEQAQADSAASRHTPMMQQYLRIKADHPDTLLFYRMGDFYELFHDDAEKAARLLDITLTARGASNGVPIRMAGIPFHSADQYLARLVKLGESVAICEQIGDPATSKGPVERKVVRIVTPGTLTDAALLPDKADTFLMAVHQQTTRRGVSKTGLAWLNLASGELRLMECEAAQLGRELERIRPAELLYADGIELPALACARTRLPEWHFDQDAGTRRLREQLGVASLDPFGCAGLGAALGAAGALLNYAATTQGQSLRHVQGVKVERESEYVGLDSATRRNLELTETLRGGESPTLFSLLDTCCTAMGSRALRHWLHHPLRDPALPQARQQAIGVLIDQGTDALRTALRRLADVERITSRLALLNARPRDLSSLRDTLRALPDVQACIRDDQGSTLLAQSLHDLAVPQDCLDLLVRAVAEEPATVVRDGGVIARGYDAGLDELRDISENCGQFLIDLETRERARTGIANLRVEFNRVHGFYIEVTNGQADKVPDDYRRRQTLKNAERYITPELKAFEDKALSAQDRALAREKQLYDGLLQALLPHIGELQRVAGALARLDVLTALAERAQTLDWSAPERVAENVVDIVQGRHPVVEGQLAAESVAFIANDCQLNEARKLLLITGPNMGGKSTFMRQTALIVLLACVGAYVPARRAVIGPIDRIFTRIGAADDLAGGRSTFMVEMTEAAGILHHATPASLVLMDEIGRGTSTFDGLALAWAIARHLLSHNRSHTLFATHYFELTQLPQEFPQAANVHLSAVEHGDGIVFLHAVQDGPASQSYGLQVAQLAGVPQPVIRAARKHLAWLEQQSADATPTPQLDLFAAPPTPDDDEDDFGAAPSAVPAPLAPTLAPEQAALVDALANLDPDTLTPRAALEALYRLKALAGEALDAA</sequence>
<evidence type="ECO:0000255" key="1">
    <source>
        <dbReference type="HAMAP-Rule" id="MF_00096"/>
    </source>
</evidence>
<evidence type="ECO:0000256" key="2">
    <source>
        <dbReference type="SAM" id="MobiDB-lite"/>
    </source>
</evidence>
<gene>
    <name evidence="1" type="primary">mutS</name>
    <name type="ordered locus">H16_A1210</name>
</gene>
<organism>
    <name type="scientific">Cupriavidus necator (strain ATCC 17699 / DSM 428 / KCTC 22496 / NCIMB 10442 / H16 / Stanier 337)</name>
    <name type="common">Ralstonia eutropha</name>
    <dbReference type="NCBI Taxonomy" id="381666"/>
    <lineage>
        <taxon>Bacteria</taxon>
        <taxon>Pseudomonadati</taxon>
        <taxon>Pseudomonadota</taxon>
        <taxon>Betaproteobacteria</taxon>
        <taxon>Burkholderiales</taxon>
        <taxon>Burkholderiaceae</taxon>
        <taxon>Cupriavidus</taxon>
    </lineage>
</organism>
<protein>
    <recommendedName>
        <fullName evidence="1">DNA mismatch repair protein MutS</fullName>
    </recommendedName>
</protein>
<dbReference type="EMBL" id="AM260479">
    <property type="protein sequence ID" value="CAJ92351.1"/>
    <property type="molecule type" value="Genomic_DNA"/>
</dbReference>
<dbReference type="SMR" id="Q0KCC0"/>
<dbReference type="STRING" id="381666.H16_A1210"/>
<dbReference type="KEGG" id="reh:H16_A1210"/>
<dbReference type="PATRIC" id="fig|381666.6.peg.1599"/>
<dbReference type="eggNOG" id="COG0249">
    <property type="taxonomic scope" value="Bacteria"/>
</dbReference>
<dbReference type="HOGENOM" id="CLU_002472_4_1_4"/>
<dbReference type="Proteomes" id="UP000008210">
    <property type="component" value="Chromosome 1"/>
</dbReference>
<dbReference type="GO" id="GO:0005829">
    <property type="term" value="C:cytosol"/>
    <property type="evidence" value="ECO:0007669"/>
    <property type="project" value="TreeGrafter"/>
</dbReference>
<dbReference type="GO" id="GO:0005524">
    <property type="term" value="F:ATP binding"/>
    <property type="evidence" value="ECO:0007669"/>
    <property type="project" value="UniProtKB-UniRule"/>
</dbReference>
<dbReference type="GO" id="GO:0140664">
    <property type="term" value="F:ATP-dependent DNA damage sensor activity"/>
    <property type="evidence" value="ECO:0007669"/>
    <property type="project" value="InterPro"/>
</dbReference>
<dbReference type="GO" id="GO:0003684">
    <property type="term" value="F:damaged DNA binding"/>
    <property type="evidence" value="ECO:0007669"/>
    <property type="project" value="UniProtKB-UniRule"/>
</dbReference>
<dbReference type="GO" id="GO:0030983">
    <property type="term" value="F:mismatched DNA binding"/>
    <property type="evidence" value="ECO:0007669"/>
    <property type="project" value="InterPro"/>
</dbReference>
<dbReference type="GO" id="GO:0006298">
    <property type="term" value="P:mismatch repair"/>
    <property type="evidence" value="ECO:0007669"/>
    <property type="project" value="UniProtKB-UniRule"/>
</dbReference>
<dbReference type="CDD" id="cd03284">
    <property type="entry name" value="ABC_MutS1"/>
    <property type="match status" value="1"/>
</dbReference>
<dbReference type="FunFam" id="1.10.1420.10:FF:000001">
    <property type="entry name" value="DNA mismatch repair protein MutS"/>
    <property type="match status" value="1"/>
</dbReference>
<dbReference type="FunFam" id="3.40.1170.10:FF:000001">
    <property type="entry name" value="DNA mismatch repair protein MutS"/>
    <property type="match status" value="1"/>
</dbReference>
<dbReference type="Gene3D" id="1.10.1420.10">
    <property type="match status" value="2"/>
</dbReference>
<dbReference type="Gene3D" id="6.10.140.430">
    <property type="match status" value="1"/>
</dbReference>
<dbReference type="Gene3D" id="3.40.1170.10">
    <property type="entry name" value="DNA repair protein MutS, domain I"/>
    <property type="match status" value="1"/>
</dbReference>
<dbReference type="Gene3D" id="3.30.420.110">
    <property type="entry name" value="MutS, connector domain"/>
    <property type="match status" value="1"/>
</dbReference>
<dbReference type="Gene3D" id="3.40.50.300">
    <property type="entry name" value="P-loop containing nucleotide triphosphate hydrolases"/>
    <property type="match status" value="1"/>
</dbReference>
<dbReference type="HAMAP" id="MF_00096">
    <property type="entry name" value="MutS"/>
    <property type="match status" value="1"/>
</dbReference>
<dbReference type="InterPro" id="IPR005748">
    <property type="entry name" value="DNA_mismatch_repair_MutS"/>
</dbReference>
<dbReference type="InterPro" id="IPR007695">
    <property type="entry name" value="DNA_mismatch_repair_MutS-lik_N"/>
</dbReference>
<dbReference type="InterPro" id="IPR017261">
    <property type="entry name" value="DNA_mismatch_repair_MutS/MSH"/>
</dbReference>
<dbReference type="InterPro" id="IPR000432">
    <property type="entry name" value="DNA_mismatch_repair_MutS_C"/>
</dbReference>
<dbReference type="InterPro" id="IPR007861">
    <property type="entry name" value="DNA_mismatch_repair_MutS_clamp"/>
</dbReference>
<dbReference type="InterPro" id="IPR007696">
    <property type="entry name" value="DNA_mismatch_repair_MutS_core"/>
</dbReference>
<dbReference type="InterPro" id="IPR016151">
    <property type="entry name" value="DNA_mismatch_repair_MutS_N"/>
</dbReference>
<dbReference type="InterPro" id="IPR036187">
    <property type="entry name" value="DNA_mismatch_repair_MutS_sf"/>
</dbReference>
<dbReference type="InterPro" id="IPR007860">
    <property type="entry name" value="DNA_mmatch_repair_MutS_con_dom"/>
</dbReference>
<dbReference type="InterPro" id="IPR045076">
    <property type="entry name" value="MutS"/>
</dbReference>
<dbReference type="InterPro" id="IPR036678">
    <property type="entry name" value="MutS_con_dom_sf"/>
</dbReference>
<dbReference type="InterPro" id="IPR027417">
    <property type="entry name" value="P-loop_NTPase"/>
</dbReference>
<dbReference type="NCBIfam" id="TIGR01070">
    <property type="entry name" value="mutS1"/>
    <property type="match status" value="1"/>
</dbReference>
<dbReference type="NCBIfam" id="NF003810">
    <property type="entry name" value="PRK05399.1"/>
    <property type="match status" value="1"/>
</dbReference>
<dbReference type="PANTHER" id="PTHR11361:SF34">
    <property type="entry name" value="DNA MISMATCH REPAIR PROTEIN MSH1, MITOCHONDRIAL"/>
    <property type="match status" value="1"/>
</dbReference>
<dbReference type="PANTHER" id="PTHR11361">
    <property type="entry name" value="DNA MISMATCH REPAIR PROTEIN MUTS FAMILY MEMBER"/>
    <property type="match status" value="1"/>
</dbReference>
<dbReference type="Pfam" id="PF01624">
    <property type="entry name" value="MutS_I"/>
    <property type="match status" value="1"/>
</dbReference>
<dbReference type="Pfam" id="PF05188">
    <property type="entry name" value="MutS_II"/>
    <property type="match status" value="1"/>
</dbReference>
<dbReference type="Pfam" id="PF05192">
    <property type="entry name" value="MutS_III"/>
    <property type="match status" value="1"/>
</dbReference>
<dbReference type="Pfam" id="PF05190">
    <property type="entry name" value="MutS_IV"/>
    <property type="match status" value="1"/>
</dbReference>
<dbReference type="Pfam" id="PF00488">
    <property type="entry name" value="MutS_V"/>
    <property type="match status" value="1"/>
</dbReference>
<dbReference type="PIRSF" id="PIRSF037677">
    <property type="entry name" value="DNA_mis_repair_Msh6"/>
    <property type="match status" value="1"/>
</dbReference>
<dbReference type="SMART" id="SM00534">
    <property type="entry name" value="MUTSac"/>
    <property type="match status" value="1"/>
</dbReference>
<dbReference type="SMART" id="SM00533">
    <property type="entry name" value="MUTSd"/>
    <property type="match status" value="1"/>
</dbReference>
<dbReference type="SUPFAM" id="SSF55271">
    <property type="entry name" value="DNA repair protein MutS, domain I"/>
    <property type="match status" value="1"/>
</dbReference>
<dbReference type="SUPFAM" id="SSF53150">
    <property type="entry name" value="DNA repair protein MutS, domain II"/>
    <property type="match status" value="1"/>
</dbReference>
<dbReference type="SUPFAM" id="SSF48334">
    <property type="entry name" value="DNA repair protein MutS, domain III"/>
    <property type="match status" value="1"/>
</dbReference>
<dbReference type="SUPFAM" id="SSF52540">
    <property type="entry name" value="P-loop containing nucleoside triphosphate hydrolases"/>
    <property type="match status" value="1"/>
</dbReference>
<dbReference type="PROSITE" id="PS00486">
    <property type="entry name" value="DNA_MISMATCH_REPAIR_2"/>
    <property type="match status" value="1"/>
</dbReference>